<protein>
    <recommendedName>
        <fullName evidence="1">N-succinylarginine dihydrolase</fullName>
        <ecNumber evidence="1">3.5.3.23</ecNumber>
    </recommendedName>
</protein>
<proteinExistence type="inferred from homology"/>
<name>ASTB_ECOBW</name>
<evidence type="ECO:0000255" key="1">
    <source>
        <dbReference type="HAMAP-Rule" id="MF_01172"/>
    </source>
</evidence>
<feature type="chain" id="PRO_1000213738" description="N-succinylarginine dihydrolase">
    <location>
        <begin position="1"/>
        <end position="447"/>
    </location>
</feature>
<feature type="active site" evidence="1">
    <location>
        <position position="174"/>
    </location>
</feature>
<feature type="active site" evidence="1">
    <location>
        <position position="248"/>
    </location>
</feature>
<feature type="active site" description="Nucleophile" evidence="1">
    <location>
        <position position="365"/>
    </location>
</feature>
<feature type="binding site" evidence="1">
    <location>
        <begin position="19"/>
        <end position="28"/>
    </location>
    <ligand>
        <name>substrate</name>
    </ligand>
</feature>
<feature type="binding site" evidence="1">
    <location>
        <position position="110"/>
    </location>
    <ligand>
        <name>substrate</name>
    </ligand>
</feature>
<feature type="binding site" evidence="1">
    <location>
        <begin position="137"/>
        <end position="138"/>
    </location>
    <ligand>
        <name>substrate</name>
    </ligand>
</feature>
<feature type="binding site" evidence="1">
    <location>
        <position position="212"/>
    </location>
    <ligand>
        <name>substrate</name>
    </ligand>
</feature>
<feature type="binding site" evidence="1">
    <location>
        <position position="250"/>
    </location>
    <ligand>
        <name>substrate</name>
    </ligand>
</feature>
<feature type="binding site" evidence="1">
    <location>
        <position position="359"/>
    </location>
    <ligand>
        <name>substrate</name>
    </ligand>
</feature>
<dbReference type="EC" id="3.5.3.23" evidence="1"/>
<dbReference type="EMBL" id="CP001396">
    <property type="protein sequence ID" value="ACR65589.1"/>
    <property type="molecule type" value="Genomic_DNA"/>
</dbReference>
<dbReference type="RefSeq" id="WP_000994973.1">
    <property type="nucleotide sequence ID" value="NC_012759.1"/>
</dbReference>
<dbReference type="SMR" id="C4ZZA1"/>
<dbReference type="KEGG" id="ebw:BWG_1558"/>
<dbReference type="HOGENOM" id="CLU_053835_0_0_6"/>
<dbReference type="UniPathway" id="UPA00185">
    <property type="reaction ID" value="UER00280"/>
</dbReference>
<dbReference type="GO" id="GO:0009015">
    <property type="term" value="F:N-succinylarginine dihydrolase activity"/>
    <property type="evidence" value="ECO:0007669"/>
    <property type="project" value="UniProtKB-UniRule"/>
</dbReference>
<dbReference type="GO" id="GO:0019544">
    <property type="term" value="P:arginine catabolic process to glutamate"/>
    <property type="evidence" value="ECO:0007669"/>
    <property type="project" value="UniProtKB-UniRule"/>
</dbReference>
<dbReference type="GO" id="GO:0019545">
    <property type="term" value="P:arginine catabolic process to succinate"/>
    <property type="evidence" value="ECO:0007669"/>
    <property type="project" value="UniProtKB-UniRule"/>
</dbReference>
<dbReference type="FunFam" id="3.75.10.20:FF:000001">
    <property type="entry name" value="N-succinylarginine dihydrolase"/>
    <property type="match status" value="1"/>
</dbReference>
<dbReference type="Gene3D" id="3.75.10.20">
    <property type="entry name" value="Succinylarginine dihydrolase"/>
    <property type="match status" value="1"/>
</dbReference>
<dbReference type="HAMAP" id="MF_01172">
    <property type="entry name" value="AstB"/>
    <property type="match status" value="1"/>
</dbReference>
<dbReference type="InterPro" id="IPR037031">
    <property type="entry name" value="AstB_sf"/>
</dbReference>
<dbReference type="InterPro" id="IPR007079">
    <property type="entry name" value="SuccinylArg_d-Hdrlase_AstB"/>
</dbReference>
<dbReference type="NCBIfam" id="TIGR03241">
    <property type="entry name" value="arg_catab_astB"/>
    <property type="match status" value="1"/>
</dbReference>
<dbReference type="NCBIfam" id="NF009789">
    <property type="entry name" value="PRK13281.1"/>
    <property type="match status" value="1"/>
</dbReference>
<dbReference type="PANTHER" id="PTHR30420">
    <property type="entry name" value="N-SUCCINYLARGININE DIHYDROLASE"/>
    <property type="match status" value="1"/>
</dbReference>
<dbReference type="PANTHER" id="PTHR30420:SF2">
    <property type="entry name" value="N-SUCCINYLARGININE DIHYDROLASE"/>
    <property type="match status" value="1"/>
</dbReference>
<dbReference type="Pfam" id="PF04996">
    <property type="entry name" value="AstB"/>
    <property type="match status" value="1"/>
</dbReference>
<dbReference type="SUPFAM" id="SSF55909">
    <property type="entry name" value="Pentein"/>
    <property type="match status" value="1"/>
</dbReference>
<sequence length="447" mass="49299">MNAWEVNFDGLVGLTHHYAGLSFGNEASTRHRFQVSNPRLAAKQGLLKMKALADAGFPQAVIPPHERPFIPVLRQLGFSGSDEQVLEKVARQAPHWLSSVSSASPMWVANAATIAPSADTLDGKVHLTVANLNNKFHRSLEAPVTESLLKAIFNDEEKFSVHSALPQVALLGDEGAANHNRLGGHYGEPGMQLFVYGREEGNDTRPSRYPARQTREASEAVARLNQVNPQQVIFAQQNPDVIDQGVFHNDVIAVSNRQVLFCHQQAFARQSQLLANLRARVNGFMAIEVPATQVSVSDTVSTYLFNSQLLSRDDGSMMLVLPQECREHAGVWGYLNELLAADNPISELKVFDLRESMANGGGPACLRLRVVLTEEERRAVNPAVMMNDTLFNALNDWVDRYYRDRLTAADLADPQLLREGREALDVLSQLLNLGSVYPFQREGGGNG</sequence>
<accession>C4ZZA1</accession>
<organism>
    <name type="scientific">Escherichia coli (strain K12 / MC4100 / BW2952)</name>
    <dbReference type="NCBI Taxonomy" id="595496"/>
    <lineage>
        <taxon>Bacteria</taxon>
        <taxon>Pseudomonadati</taxon>
        <taxon>Pseudomonadota</taxon>
        <taxon>Gammaproteobacteria</taxon>
        <taxon>Enterobacterales</taxon>
        <taxon>Enterobacteriaceae</taxon>
        <taxon>Escherichia</taxon>
    </lineage>
</organism>
<keyword id="KW-0056">Arginine metabolism</keyword>
<keyword id="KW-0378">Hydrolase</keyword>
<gene>
    <name evidence="1" type="primary">astB</name>
    <name type="ordered locus">BWG_1558</name>
</gene>
<reference key="1">
    <citation type="journal article" date="2009" name="J. Bacteriol.">
        <title>Genomic sequencing reveals regulatory mutations and recombinational events in the widely used MC4100 lineage of Escherichia coli K-12.</title>
        <authorList>
            <person name="Ferenci T."/>
            <person name="Zhou Z."/>
            <person name="Betteridge T."/>
            <person name="Ren Y."/>
            <person name="Liu Y."/>
            <person name="Feng L."/>
            <person name="Reeves P.R."/>
            <person name="Wang L."/>
        </authorList>
    </citation>
    <scope>NUCLEOTIDE SEQUENCE [LARGE SCALE GENOMIC DNA]</scope>
    <source>
        <strain>K12 / MC4100 / BW2952</strain>
    </source>
</reference>
<comment type="function">
    <text evidence="1">Catalyzes the hydrolysis of N(2)-succinylarginine into N(2)-succinylornithine, ammonia and CO(2).</text>
</comment>
<comment type="catalytic activity">
    <reaction evidence="1">
        <text>N(2)-succinyl-L-arginine + 2 H2O + 2 H(+) = N(2)-succinyl-L-ornithine + 2 NH4(+) + CO2</text>
        <dbReference type="Rhea" id="RHEA:19533"/>
        <dbReference type="ChEBI" id="CHEBI:15377"/>
        <dbReference type="ChEBI" id="CHEBI:15378"/>
        <dbReference type="ChEBI" id="CHEBI:16526"/>
        <dbReference type="ChEBI" id="CHEBI:28938"/>
        <dbReference type="ChEBI" id="CHEBI:58241"/>
        <dbReference type="ChEBI" id="CHEBI:58514"/>
        <dbReference type="EC" id="3.5.3.23"/>
    </reaction>
</comment>
<comment type="pathway">
    <text evidence="1">Amino-acid degradation; L-arginine degradation via AST pathway; L-glutamate and succinate from L-arginine: step 2/5.</text>
</comment>
<comment type="subunit">
    <text evidence="1">Homodimer.</text>
</comment>
<comment type="similarity">
    <text evidence="1">Belongs to the succinylarginine dihydrolase family.</text>
</comment>